<feature type="chain" id="PRO_0000233261" description="GTP-binding protein Rit2">
    <location>
        <begin position="1"/>
        <end position="217"/>
    </location>
</feature>
<feature type="binding site" evidence="1">
    <location>
        <begin position="27"/>
        <end position="34"/>
    </location>
    <ligand>
        <name>GTP</name>
        <dbReference type="ChEBI" id="CHEBI:37565"/>
    </ligand>
</feature>
<feature type="binding site" evidence="1">
    <location>
        <begin position="74"/>
        <end position="78"/>
    </location>
    <ligand>
        <name>GTP</name>
        <dbReference type="ChEBI" id="CHEBI:37565"/>
    </ligand>
</feature>
<feature type="binding site" evidence="1">
    <location>
        <begin position="133"/>
        <end position="136"/>
    </location>
    <ligand>
        <name>GTP</name>
        <dbReference type="ChEBI" id="CHEBI:37565"/>
    </ligand>
</feature>
<sequence length="217" mass="24761">MEAENEAHCCPGSSSGGSREYKVVMLGAGGVGKSAVTMQFISHQFPDYHDPTIEDAYKTQVRIDNEPAYLDILDTAGQAEFTAMREQYMRGGEGFIICYSVTDRQSFQEAAKFKELIFQVRHTYEIPLVLVGNKIDLEQFRQVSTEEGMTLARDYNCAFFETSAALRFGIDDAFQGLVREIRRKESMLSLVERKLKRKDSLWKKIKASLKKKRENMI</sequence>
<reference key="1">
    <citation type="journal article" date="2004" name="Genome Res.">
        <title>The status, quality, and expansion of the NIH full-length cDNA project: the Mammalian Gene Collection (MGC).</title>
        <authorList>
            <consortium name="The MGC Project Team"/>
        </authorList>
    </citation>
    <scope>NUCLEOTIDE SEQUENCE [LARGE SCALE MRNA]</scope>
    <source>
        <tissue>Brain</tissue>
    </source>
</reference>
<dbReference type="EC" id="3.6.5.2" evidence="2"/>
<dbReference type="EMBL" id="BC091382">
    <property type="protein sequence ID" value="AAH91382.1"/>
    <property type="molecule type" value="mRNA"/>
</dbReference>
<dbReference type="RefSeq" id="NP_001013078.1">
    <property type="nucleotide sequence ID" value="NM_001013060.1"/>
</dbReference>
<dbReference type="SMR" id="Q5BJQ5"/>
<dbReference type="CORUM" id="Q5BJQ5"/>
<dbReference type="FunCoup" id="Q5BJQ5">
    <property type="interactions" value="417"/>
</dbReference>
<dbReference type="IntAct" id="Q5BJQ5">
    <property type="interactions" value="2"/>
</dbReference>
<dbReference type="STRING" id="10116.ENSRNOP00000023871"/>
<dbReference type="PhosphoSitePlus" id="Q5BJQ5"/>
<dbReference type="PaxDb" id="10116-ENSRNOP00000023871"/>
<dbReference type="Ensembl" id="ENSRNOT00000023874.7">
    <property type="protein sequence ID" value="ENSRNOP00000023871.4"/>
    <property type="gene ID" value="ENSRNOG00000017568.7"/>
</dbReference>
<dbReference type="GeneID" id="291713"/>
<dbReference type="KEGG" id="rno:291713"/>
<dbReference type="UCSC" id="RGD:1307654">
    <property type="organism name" value="rat"/>
</dbReference>
<dbReference type="AGR" id="RGD:1307654"/>
<dbReference type="CTD" id="6014"/>
<dbReference type="RGD" id="1307654">
    <property type="gene designation" value="Rit2"/>
</dbReference>
<dbReference type="eggNOG" id="KOG0395">
    <property type="taxonomic scope" value="Eukaryota"/>
</dbReference>
<dbReference type="GeneTree" id="ENSGT00940000161402"/>
<dbReference type="HOGENOM" id="CLU_041217_9_5_1"/>
<dbReference type="InParanoid" id="Q5BJQ5"/>
<dbReference type="OMA" id="FRRKQRH"/>
<dbReference type="OrthoDB" id="5976022at2759"/>
<dbReference type="PhylomeDB" id="Q5BJQ5"/>
<dbReference type="TreeFam" id="TF315072"/>
<dbReference type="PRO" id="PR:Q5BJQ5"/>
<dbReference type="Proteomes" id="UP000002494">
    <property type="component" value="Chromosome 18"/>
</dbReference>
<dbReference type="Bgee" id="ENSRNOG00000017568">
    <property type="expression patterns" value="Expressed in cerebellum and 10 other cell types or tissues"/>
</dbReference>
<dbReference type="GO" id="GO:0044297">
    <property type="term" value="C:cell body"/>
    <property type="evidence" value="ECO:0000250"/>
    <property type="project" value="ParkinsonsUK-UCL"/>
</dbReference>
<dbReference type="GO" id="GO:0005737">
    <property type="term" value="C:cytoplasm"/>
    <property type="evidence" value="ECO:0000266"/>
    <property type="project" value="RGD"/>
</dbReference>
<dbReference type="GO" id="GO:0005829">
    <property type="term" value="C:cytosol"/>
    <property type="evidence" value="ECO:0007669"/>
    <property type="project" value="Ensembl"/>
</dbReference>
<dbReference type="GO" id="GO:0097447">
    <property type="term" value="C:dendritic tree"/>
    <property type="evidence" value="ECO:0000250"/>
    <property type="project" value="ParkinsonsUK-UCL"/>
</dbReference>
<dbReference type="GO" id="GO:0005794">
    <property type="term" value="C:Golgi apparatus"/>
    <property type="evidence" value="ECO:0007669"/>
    <property type="project" value="Ensembl"/>
</dbReference>
<dbReference type="GO" id="GO:0045121">
    <property type="term" value="C:membrane raft"/>
    <property type="evidence" value="ECO:0000266"/>
    <property type="project" value="RGD"/>
</dbReference>
<dbReference type="GO" id="GO:0043005">
    <property type="term" value="C:neuron projection"/>
    <property type="evidence" value="ECO:0000266"/>
    <property type="project" value="RGD"/>
</dbReference>
<dbReference type="GO" id="GO:0005654">
    <property type="term" value="C:nucleoplasm"/>
    <property type="evidence" value="ECO:0007669"/>
    <property type="project" value="Ensembl"/>
</dbReference>
<dbReference type="GO" id="GO:0005634">
    <property type="term" value="C:nucleus"/>
    <property type="evidence" value="ECO:0000266"/>
    <property type="project" value="RGD"/>
</dbReference>
<dbReference type="GO" id="GO:0005886">
    <property type="term" value="C:plasma membrane"/>
    <property type="evidence" value="ECO:0000250"/>
    <property type="project" value="ParkinsonsUK-UCL"/>
</dbReference>
<dbReference type="GO" id="GO:0005516">
    <property type="term" value="F:calmodulin binding"/>
    <property type="evidence" value="ECO:0000250"/>
    <property type="project" value="ParkinsonsUK-UCL"/>
</dbReference>
<dbReference type="GO" id="GO:0003682">
    <property type="term" value="F:chromatin binding"/>
    <property type="evidence" value="ECO:0000266"/>
    <property type="project" value="RGD"/>
</dbReference>
<dbReference type="GO" id="GO:0003925">
    <property type="term" value="F:G protein activity"/>
    <property type="evidence" value="ECO:0007669"/>
    <property type="project" value="UniProtKB-EC"/>
</dbReference>
<dbReference type="GO" id="GO:0019003">
    <property type="term" value="F:GDP binding"/>
    <property type="evidence" value="ECO:0000318"/>
    <property type="project" value="GO_Central"/>
</dbReference>
<dbReference type="GO" id="GO:0005525">
    <property type="term" value="F:GTP binding"/>
    <property type="evidence" value="ECO:0000250"/>
    <property type="project" value="ParkinsonsUK-UCL"/>
</dbReference>
<dbReference type="GO" id="GO:0003924">
    <property type="term" value="F:GTPase activity"/>
    <property type="evidence" value="ECO:0000250"/>
    <property type="project" value="ParkinsonsUK-UCL"/>
</dbReference>
<dbReference type="GO" id="GO:0030215">
    <property type="term" value="F:semaphorin receptor binding"/>
    <property type="evidence" value="ECO:0000266"/>
    <property type="project" value="RGD"/>
</dbReference>
<dbReference type="GO" id="GO:0007189">
    <property type="term" value="P:adenylate cyclase-activating G protein-coupled receptor signaling pathway"/>
    <property type="evidence" value="ECO:0000315"/>
    <property type="project" value="BHF-UCL"/>
</dbReference>
<dbReference type="GO" id="GO:0035556">
    <property type="term" value="P:intracellular signal transduction"/>
    <property type="evidence" value="ECO:0000266"/>
    <property type="project" value="RGD"/>
</dbReference>
<dbReference type="GO" id="GO:0032507">
    <property type="term" value="P:maintenance of protein location in cell"/>
    <property type="evidence" value="ECO:0000266"/>
    <property type="project" value="RGD"/>
</dbReference>
<dbReference type="GO" id="GO:0010977">
    <property type="term" value="P:negative regulation of neuron projection development"/>
    <property type="evidence" value="ECO:0000266"/>
    <property type="project" value="RGD"/>
</dbReference>
<dbReference type="GO" id="GO:0043410">
    <property type="term" value="P:positive regulation of MAPK cascade"/>
    <property type="evidence" value="ECO:0000315"/>
    <property type="project" value="ParkinsonsUK-UCL"/>
</dbReference>
<dbReference type="GO" id="GO:0010976">
    <property type="term" value="P:positive regulation of neuron projection development"/>
    <property type="evidence" value="ECO:0000315"/>
    <property type="project" value="ParkinsonsUK-UCL"/>
</dbReference>
<dbReference type="GO" id="GO:0045944">
    <property type="term" value="P:positive regulation of transcription by RNA polymerase II"/>
    <property type="evidence" value="ECO:0000266"/>
    <property type="project" value="RGD"/>
</dbReference>
<dbReference type="GO" id="GO:0007265">
    <property type="term" value="P:Ras protein signal transduction"/>
    <property type="evidence" value="ECO:0000266"/>
    <property type="project" value="RGD"/>
</dbReference>
<dbReference type="GO" id="GO:0050848">
    <property type="term" value="P:regulation of calcium-mediated signaling"/>
    <property type="evidence" value="ECO:0000315"/>
    <property type="project" value="ParkinsonsUK-UCL"/>
</dbReference>
<dbReference type="GO" id="GO:0032489">
    <property type="term" value="P:regulation of Cdc42 protein signal transduction"/>
    <property type="evidence" value="ECO:0000266"/>
    <property type="project" value="RGD"/>
</dbReference>
<dbReference type="GO" id="GO:0030100">
    <property type="term" value="P:regulation of endocytosis"/>
    <property type="evidence" value="ECO:0000266"/>
    <property type="project" value="RGD"/>
</dbReference>
<dbReference type="CDD" id="cd04141">
    <property type="entry name" value="Rit_Rin_Ric"/>
    <property type="match status" value="1"/>
</dbReference>
<dbReference type="FunFam" id="3.40.50.300:FF:000343">
    <property type="entry name" value="Ras family gtpase"/>
    <property type="match status" value="1"/>
</dbReference>
<dbReference type="Gene3D" id="3.40.50.300">
    <property type="entry name" value="P-loop containing nucleotide triphosphate hydrolases"/>
    <property type="match status" value="1"/>
</dbReference>
<dbReference type="InterPro" id="IPR027417">
    <property type="entry name" value="P-loop_NTPase"/>
</dbReference>
<dbReference type="InterPro" id="IPR005225">
    <property type="entry name" value="Small_GTP-bd"/>
</dbReference>
<dbReference type="InterPro" id="IPR001806">
    <property type="entry name" value="Small_GTPase"/>
</dbReference>
<dbReference type="InterPro" id="IPR020849">
    <property type="entry name" value="Small_GTPase_Ras-type"/>
</dbReference>
<dbReference type="NCBIfam" id="TIGR00231">
    <property type="entry name" value="small_GTP"/>
    <property type="match status" value="1"/>
</dbReference>
<dbReference type="PANTHER" id="PTHR24070">
    <property type="entry name" value="RAS, DI-RAS, AND RHEB FAMILY MEMBERS OF SMALL GTPASE SUPERFAMILY"/>
    <property type="match status" value="1"/>
</dbReference>
<dbReference type="Pfam" id="PF00071">
    <property type="entry name" value="Ras"/>
    <property type="match status" value="1"/>
</dbReference>
<dbReference type="PRINTS" id="PR00449">
    <property type="entry name" value="RASTRNSFRMNG"/>
</dbReference>
<dbReference type="SMART" id="SM00175">
    <property type="entry name" value="RAB"/>
    <property type="match status" value="1"/>
</dbReference>
<dbReference type="SMART" id="SM00176">
    <property type="entry name" value="RAN"/>
    <property type="match status" value="1"/>
</dbReference>
<dbReference type="SMART" id="SM00173">
    <property type="entry name" value="RAS"/>
    <property type="match status" value="1"/>
</dbReference>
<dbReference type="SMART" id="SM00174">
    <property type="entry name" value="RHO"/>
    <property type="match status" value="1"/>
</dbReference>
<dbReference type="SUPFAM" id="SSF52540">
    <property type="entry name" value="P-loop containing nucleoside triphosphate hydrolases"/>
    <property type="match status" value="1"/>
</dbReference>
<dbReference type="PROSITE" id="PS51421">
    <property type="entry name" value="RAS"/>
    <property type="match status" value="1"/>
</dbReference>
<gene>
    <name type="primary">Rit2</name>
</gene>
<evidence type="ECO:0000250" key="1"/>
<evidence type="ECO:0000250" key="2">
    <source>
        <dbReference type="UniProtKB" id="P70425"/>
    </source>
</evidence>
<evidence type="ECO:0000250" key="3">
    <source>
        <dbReference type="UniProtKB" id="Q99578"/>
    </source>
</evidence>
<evidence type="ECO:0000305" key="4"/>
<accession>Q5BJQ5</accession>
<proteinExistence type="evidence at protein level"/>
<keyword id="KW-0112">Calmodulin-binding</keyword>
<keyword id="KW-1003">Cell membrane</keyword>
<keyword id="KW-0342">GTP-binding</keyword>
<keyword id="KW-0378">Hydrolase</keyword>
<keyword id="KW-0472">Membrane</keyword>
<keyword id="KW-0547">Nucleotide-binding</keyword>
<keyword id="KW-0539">Nucleus</keyword>
<keyword id="KW-1185">Reference proteome</keyword>
<protein>
    <recommendedName>
        <fullName>GTP-binding protein Rit2</fullName>
        <ecNumber evidence="2">3.6.5.2</ecNumber>
    </recommendedName>
</protein>
<name>RIT2_RAT</name>
<comment type="function">
    <text evidence="1">Binds and exchanges GTP and GDP.</text>
</comment>
<comment type="catalytic activity">
    <reaction evidence="2">
        <text>GTP + H2O = GDP + phosphate + H(+)</text>
        <dbReference type="Rhea" id="RHEA:19669"/>
        <dbReference type="ChEBI" id="CHEBI:15377"/>
        <dbReference type="ChEBI" id="CHEBI:15378"/>
        <dbReference type="ChEBI" id="CHEBI:37565"/>
        <dbReference type="ChEBI" id="CHEBI:43474"/>
        <dbReference type="ChEBI" id="CHEBI:58189"/>
        <dbReference type="EC" id="3.6.5.2"/>
    </reaction>
</comment>
<comment type="activity regulation">
    <text evidence="1">Alternates between an inactive form bound to GDP and an active form bound to GTP.</text>
</comment>
<comment type="subunit">
    <text evidence="1">Interacts with AFDN, the C-terminal domain of RALGDS and RLF, but not with RIN1 and PIK3CA. RLF binds exclusively to the active GTP-bound form. Binds calmodulin. Interacts with PLXNB3 (By similarity).</text>
</comment>
<comment type="interaction">
    <interactant intactId="EBI-11686902">
        <id>Q5BJQ5</id>
    </interactant>
    <interactant intactId="EBI-6661445">
        <id>Q01959</id>
        <label>SLC6A3</label>
    </interactant>
    <organismsDiffer>true</organismsDiffer>
    <experiments>2</experiments>
</comment>
<comment type="subcellular location">
    <subcellularLocation>
        <location evidence="2">Nucleus</location>
    </subcellularLocation>
    <subcellularLocation>
        <location evidence="2">Cell membrane</location>
    </subcellularLocation>
    <text evidence="3">Colocalizes with PLXNB3 at the plasma membrane.</text>
</comment>
<comment type="miscellaneous">
    <text evidence="1">Shows rapid uncatalyzed guanine nucleotide dissociation rates, which are much faster than those of most Ras subfamily members.</text>
</comment>
<comment type="similarity">
    <text evidence="4">Belongs to the small GTPase superfamily. Ras family.</text>
</comment>
<organism>
    <name type="scientific">Rattus norvegicus</name>
    <name type="common">Rat</name>
    <dbReference type="NCBI Taxonomy" id="10116"/>
    <lineage>
        <taxon>Eukaryota</taxon>
        <taxon>Metazoa</taxon>
        <taxon>Chordata</taxon>
        <taxon>Craniata</taxon>
        <taxon>Vertebrata</taxon>
        <taxon>Euteleostomi</taxon>
        <taxon>Mammalia</taxon>
        <taxon>Eutheria</taxon>
        <taxon>Euarchontoglires</taxon>
        <taxon>Glires</taxon>
        <taxon>Rodentia</taxon>
        <taxon>Myomorpha</taxon>
        <taxon>Muroidea</taxon>
        <taxon>Muridae</taxon>
        <taxon>Murinae</taxon>
        <taxon>Rattus</taxon>
    </lineage>
</organism>